<organism evidence="10">
    <name type="scientific">Candida albicans (strain SC5314 / ATCC MYA-2876)</name>
    <name type="common">Yeast</name>
    <dbReference type="NCBI Taxonomy" id="237561"/>
    <lineage>
        <taxon>Eukaryota</taxon>
        <taxon>Fungi</taxon>
        <taxon>Dikarya</taxon>
        <taxon>Ascomycota</taxon>
        <taxon>Saccharomycotina</taxon>
        <taxon>Pichiomycetes</taxon>
        <taxon>Debaryomycetaceae</taxon>
        <taxon>Candida/Lodderomyces clade</taxon>
        <taxon>Candida</taxon>
    </lineage>
</organism>
<sequence>MSQSPTNVPRSYNSVLDLKLASPTNSASGATGGWIVQKFGGTSVGKFPENIVDNIVKVYSQTNRVAVVCSARSSQTKSEGTTSRLLRSADLAENDKDYQPLLNAIEEDHVTNAERIQSEEIKQELIKDTKQEIEHVRELLHACQIIGEISPRSLDSIMAVGEKLSCLFMTALMKDHGLNAVYINLQDVIPLSYDFQKGFDDSFYQFLSQEIGKRVLQCDKEREGEEDVIPVLTGYFGVVPGGLLNGVGRGYTDLCAALAAVALQADELQIWKEVDGIFTADPRKVPNARLLDSVTPEEAAELTYYGSEVIHPFTMEQVIRAKIPIRIKNVENPTGKGTIIYPDNIGRRGEATPPHPPAAFEQLAMSSLLQRKRSATAITAKQDIVVINIHSNKKTLSHGFLAHVFTTLDKYKLVVDLISTSEVHVSMALSIQSDQESQLKHALVDLRKMGTVDVTKKMTIVSLVGKQMVNFIGIAGNMFKVLADEKINIEMISQGANEINISAVINEKDTIRALKSIHAKLLEGGSAIGDSSAVDTRLEALKLS</sequence>
<comment type="function">
    <text evidence="1">Phosphorylates aspartate, the first step in the biosynthesis of amino acids that derive from aspartate (the aspartate family of amino acids), including methioinine and threonine, the latter of which is a precursor to isoleucine.</text>
</comment>
<comment type="catalytic activity">
    <reaction evidence="1">
        <text>L-aspartate + ATP = 4-phospho-L-aspartate + ADP</text>
        <dbReference type="Rhea" id="RHEA:23776"/>
        <dbReference type="ChEBI" id="CHEBI:29991"/>
        <dbReference type="ChEBI" id="CHEBI:30616"/>
        <dbReference type="ChEBI" id="CHEBI:57535"/>
        <dbReference type="ChEBI" id="CHEBI:456216"/>
        <dbReference type="EC" id="2.7.2.4"/>
    </reaction>
    <physiologicalReaction direction="left-to-right" evidence="1">
        <dbReference type="Rhea" id="RHEA:23777"/>
    </physiologicalReaction>
</comment>
<comment type="pathway">
    <text evidence="1">Amino-acid biosynthesis; L-methionine biosynthesis via de novo pathway; L-homoserine from L-aspartate: step 1/3.</text>
</comment>
<comment type="pathway">
    <text evidence="1">Amino-acid biosynthesis; L-threonine biosynthesis; L-threonine from L-aspartate: step 1/5.</text>
</comment>
<comment type="disruption phenotype">
    <text evidence="4 5">Sensitive to sulfometuron methyl (a compound that increases flux through the threonine biosynthetic pathway) (PubMed:20305002). Does not decrease survival in a mouse model of infection (PubMed:20305003).</text>
</comment>
<comment type="similarity">
    <text evidence="3">Belongs to the aspartokinase family.</text>
</comment>
<proteinExistence type="inferred from homology"/>
<accession>A0A1D8PMB8</accession>
<dbReference type="EC" id="2.7.2.4" evidence="1"/>
<dbReference type="EMBL" id="CP017626">
    <property type="protein sequence ID" value="AOW29286.1"/>
    <property type="molecule type" value="Genomic_DNA"/>
</dbReference>
<dbReference type="RefSeq" id="XP_716543.2">
    <property type="nucleotide sequence ID" value="XM_711450.2"/>
</dbReference>
<dbReference type="SMR" id="A0A1D8PMB8"/>
<dbReference type="FunCoup" id="A0A1D8PMB8">
    <property type="interactions" value="332"/>
</dbReference>
<dbReference type="STRING" id="237561.A0A1D8PMB8"/>
<dbReference type="EnsemblFungi" id="C4_05540W_A-T">
    <property type="protein sequence ID" value="C4_05540W_A-T-p1"/>
    <property type="gene ID" value="C4_05540W_A"/>
</dbReference>
<dbReference type="GeneID" id="3641771"/>
<dbReference type="KEGG" id="cal:CAALFM_C405540WA"/>
<dbReference type="CGD" id="CAL0000181037">
    <property type="gene designation" value="HOM3"/>
</dbReference>
<dbReference type="VEuPathDB" id="FungiDB:C4_05540W_A"/>
<dbReference type="eggNOG" id="KOG0456">
    <property type="taxonomic scope" value="Eukaryota"/>
</dbReference>
<dbReference type="InParanoid" id="A0A1D8PMB8"/>
<dbReference type="OrthoDB" id="4323675at2759"/>
<dbReference type="UniPathway" id="UPA00050">
    <property type="reaction ID" value="UER00461"/>
</dbReference>
<dbReference type="UniPathway" id="UPA00051">
    <property type="reaction ID" value="UER00462"/>
</dbReference>
<dbReference type="Proteomes" id="UP000000559">
    <property type="component" value="Chromosome 4"/>
</dbReference>
<dbReference type="GO" id="GO:0005829">
    <property type="term" value="C:cytosol"/>
    <property type="evidence" value="ECO:0000318"/>
    <property type="project" value="GO_Central"/>
</dbReference>
<dbReference type="GO" id="GO:0004072">
    <property type="term" value="F:aspartate kinase activity"/>
    <property type="evidence" value="ECO:0000318"/>
    <property type="project" value="GO_Central"/>
</dbReference>
<dbReference type="GO" id="GO:0005524">
    <property type="term" value="F:ATP binding"/>
    <property type="evidence" value="ECO:0007669"/>
    <property type="project" value="UniProtKB-KW"/>
</dbReference>
<dbReference type="GO" id="GO:0071266">
    <property type="term" value="P:'de novo' L-methionine biosynthetic process"/>
    <property type="evidence" value="ECO:0007669"/>
    <property type="project" value="EnsemblFungi"/>
</dbReference>
<dbReference type="GO" id="GO:0009090">
    <property type="term" value="P:homoserine biosynthetic process"/>
    <property type="evidence" value="ECO:0000318"/>
    <property type="project" value="GO_Central"/>
</dbReference>
<dbReference type="GO" id="GO:0009088">
    <property type="term" value="P:threonine biosynthetic process"/>
    <property type="evidence" value="ECO:0007669"/>
    <property type="project" value="UniProtKB-KW"/>
</dbReference>
<dbReference type="FunFam" id="3.30.70.260:FF:000033">
    <property type="entry name" value="Aspartokinase"/>
    <property type="match status" value="1"/>
</dbReference>
<dbReference type="FunFam" id="3.30.2130.10:FF:000001">
    <property type="entry name" value="Bifunctional aspartokinase/homoserine dehydrogenase"/>
    <property type="match status" value="1"/>
</dbReference>
<dbReference type="FunFam" id="3.40.1160.10:FF:000023">
    <property type="entry name" value="Probable aspartokinase"/>
    <property type="match status" value="1"/>
</dbReference>
<dbReference type="Gene3D" id="3.30.70.260">
    <property type="match status" value="2"/>
</dbReference>
<dbReference type="Gene3D" id="3.40.1160.10">
    <property type="entry name" value="Acetylglutamate kinase-like"/>
    <property type="match status" value="1"/>
</dbReference>
<dbReference type="InterPro" id="IPR036393">
    <property type="entry name" value="AceGlu_kinase-like_sf"/>
</dbReference>
<dbReference type="InterPro" id="IPR045865">
    <property type="entry name" value="ACT-like_dom_sf"/>
</dbReference>
<dbReference type="InterPro" id="IPR054352">
    <property type="entry name" value="ACT_Aspartokinase"/>
</dbReference>
<dbReference type="InterPro" id="IPR002912">
    <property type="entry name" value="ACT_dom"/>
</dbReference>
<dbReference type="InterPro" id="IPR001048">
    <property type="entry name" value="Asp/Glu/Uridylate_kinase"/>
</dbReference>
<dbReference type="InterPro" id="IPR001341">
    <property type="entry name" value="Asp_kinase"/>
</dbReference>
<dbReference type="InterPro" id="IPR018042">
    <property type="entry name" value="Aspartate_kinase_CS"/>
</dbReference>
<dbReference type="NCBIfam" id="TIGR00657">
    <property type="entry name" value="asp_kinases"/>
    <property type="match status" value="1"/>
</dbReference>
<dbReference type="PANTHER" id="PTHR21499">
    <property type="entry name" value="ASPARTATE KINASE"/>
    <property type="match status" value="1"/>
</dbReference>
<dbReference type="PANTHER" id="PTHR21499:SF59">
    <property type="entry name" value="ASPARTOKINASE"/>
    <property type="match status" value="1"/>
</dbReference>
<dbReference type="Pfam" id="PF00696">
    <property type="entry name" value="AA_kinase"/>
    <property type="match status" value="1"/>
</dbReference>
<dbReference type="Pfam" id="PF22468">
    <property type="entry name" value="ACT_9"/>
    <property type="match status" value="1"/>
</dbReference>
<dbReference type="SUPFAM" id="SSF55021">
    <property type="entry name" value="ACT-like"/>
    <property type="match status" value="2"/>
</dbReference>
<dbReference type="SUPFAM" id="SSF53633">
    <property type="entry name" value="Carbamate kinase-like"/>
    <property type="match status" value="1"/>
</dbReference>
<dbReference type="PROSITE" id="PS51671">
    <property type="entry name" value="ACT"/>
    <property type="match status" value="1"/>
</dbReference>
<dbReference type="PROSITE" id="PS00324">
    <property type="entry name" value="ASPARTOKINASE"/>
    <property type="match status" value="1"/>
</dbReference>
<name>AK_CANAL</name>
<feature type="chain" id="PRO_0000461579" description="Aspartokinase">
    <location>
        <begin position="1"/>
        <end position="544"/>
    </location>
</feature>
<feature type="domain" description="ACT" evidence="2">
    <location>
        <begin position="463"/>
        <end position="535"/>
    </location>
</feature>
<evidence type="ECO:0000250" key="1">
    <source>
        <dbReference type="UniProtKB" id="P10869"/>
    </source>
</evidence>
<evidence type="ECO:0000255" key="2">
    <source>
        <dbReference type="PROSITE-ProRule" id="PRU01007"/>
    </source>
</evidence>
<evidence type="ECO:0000255" key="3">
    <source>
        <dbReference type="RuleBase" id="RU003448"/>
    </source>
</evidence>
<evidence type="ECO:0000269" key="4">
    <source>
    </source>
</evidence>
<evidence type="ECO:0000269" key="5">
    <source>
    </source>
</evidence>
<evidence type="ECO:0000303" key="6">
    <source>
    </source>
</evidence>
<evidence type="ECO:0000305" key="7"/>
<evidence type="ECO:0000312" key="8">
    <source>
        <dbReference type="CGD" id="CAL0000181037"/>
    </source>
</evidence>
<evidence type="ECO:0000312" key="9">
    <source>
        <dbReference type="EMBL" id="AOW29286.1"/>
    </source>
</evidence>
<evidence type="ECO:0000312" key="10">
    <source>
        <dbReference type="Proteomes" id="UP000000559"/>
    </source>
</evidence>
<keyword id="KW-0028">Amino-acid biosynthesis</keyword>
<keyword id="KW-0067">ATP-binding</keyword>
<keyword id="KW-0418">Kinase</keyword>
<keyword id="KW-0486">Methionine biosynthesis</keyword>
<keyword id="KW-0547">Nucleotide-binding</keyword>
<keyword id="KW-1185">Reference proteome</keyword>
<keyword id="KW-0791">Threonine biosynthesis</keyword>
<keyword id="KW-0808">Transferase</keyword>
<reference evidence="10" key="1">
    <citation type="journal article" date="2004" name="Proc. Natl. Acad. Sci. U.S.A.">
        <title>The diploid genome sequence of Candida albicans.</title>
        <authorList>
            <person name="Jones T."/>
            <person name="Federspiel N.A."/>
            <person name="Chibana H."/>
            <person name="Dungan J."/>
            <person name="Kalman S."/>
            <person name="Magee B.B."/>
            <person name="Newport G."/>
            <person name="Thorstenson Y.R."/>
            <person name="Agabian N."/>
            <person name="Magee P.T."/>
            <person name="Davis R.W."/>
            <person name="Scherer S."/>
        </authorList>
    </citation>
    <scope>NUCLEOTIDE SEQUENCE [LARGE SCALE GENOMIC DNA]</scope>
    <source>
        <strain evidence="10">SC5314 / ATCC MYA-2876</strain>
    </source>
</reference>
<reference evidence="10" key="2">
    <citation type="journal article" date="2007" name="Genome Biol.">
        <title>Assembly of the Candida albicans genome into sixteen supercontigs aligned on the eight chromosomes.</title>
        <authorList>
            <person name="van het Hoog M."/>
            <person name="Rast T.J."/>
            <person name="Martchenko M."/>
            <person name="Grindle S."/>
            <person name="Dignard D."/>
            <person name="Hogues H."/>
            <person name="Cuomo C."/>
            <person name="Berriman M."/>
            <person name="Scherer S."/>
            <person name="Magee B.B."/>
            <person name="Whiteway M."/>
            <person name="Chibana H."/>
            <person name="Nantel A."/>
            <person name="Magee P.T."/>
        </authorList>
    </citation>
    <scope>GENOME REANNOTATION</scope>
    <source>
        <strain evidence="10">SC5314 / ATCC MYA-2876</strain>
    </source>
</reference>
<reference evidence="10" key="3">
    <citation type="journal article" date="2013" name="Genome Biol.">
        <title>Assembly of a phased diploid Candida albicans genome facilitates allele-specific measurements and provides a simple model for repeat and indel structure.</title>
        <authorList>
            <person name="Muzzey D."/>
            <person name="Schwartz K."/>
            <person name="Weissman J.S."/>
            <person name="Sherlock G."/>
        </authorList>
    </citation>
    <scope>NUCLEOTIDE SEQUENCE [LARGE SCALE GENOMIC DNA]</scope>
    <scope>GENOME REANNOTATION</scope>
    <source>
        <strain evidence="10">SC5314 / ATCC MYA-2876</strain>
    </source>
</reference>
<reference key="4">
    <citation type="journal article" date="2010" name="Eukaryot. Cell">
        <title>Homoserine toxicity in Saccharomyces cerevisiae and Candida albicans homoserine kinase (thr1Delta) mutants.</title>
        <authorList>
            <person name="Kingsbury J.M."/>
            <person name="McCusker J.H."/>
        </authorList>
    </citation>
    <scope>DISRUPTION PHENOTYPE</scope>
    <source>
        <strain evidence="6">SC5314 / ATCC MYA-2876</strain>
    </source>
</reference>
<reference evidence="7" key="5">
    <citation type="journal article" date="2010" name="Eukaryot. Cell">
        <title>Fungal homoserine kinase (thr1Delta) mutants are attenuated in virulence and die rapidly upon threonine starvation and serum incubation.</title>
        <authorList>
            <person name="Kingsbury J.M."/>
            <person name="McCusker J.H."/>
        </authorList>
    </citation>
    <scope>DISRUPTION PHENOTYPE</scope>
    <source>
        <strain evidence="6">SC5314 / ATCC MYA-2876</strain>
    </source>
</reference>
<protein>
    <recommendedName>
        <fullName>Aspartokinase</fullName>
        <ecNumber evidence="1">2.7.2.4</ecNumber>
    </recommendedName>
</protein>
<gene>
    <name evidence="8" type="primary">HOM3</name>
    <name evidence="9" type="ordered locus">CAALFM_C405540WA</name>
    <name evidence="8" type="ordered locus">orf19.8820</name>
</gene>